<proteinExistence type="inferred from homology"/>
<feature type="chain" id="PRO_0000058941" description="Truncated secreted TNF-receptor-like protein A53R">
    <location>
        <begin position="1"/>
        <end position="103"/>
    </location>
</feature>
<feature type="repeat" description="TNFR-Cys 1">
    <location>
        <begin position="36"/>
        <end position="73"/>
    </location>
</feature>
<feature type="repeat" description="TNFR-Cys 2; truncated">
    <location>
        <begin position="74"/>
        <end position="103"/>
    </location>
</feature>
<feature type="disulfide bond" evidence="1">
    <location>
        <begin position="37"/>
        <end position="50"/>
    </location>
</feature>
<feature type="disulfide bond" evidence="1">
    <location>
        <begin position="51"/>
        <end position="64"/>
    </location>
</feature>
<feature type="disulfide bond" evidence="1">
    <location>
        <begin position="54"/>
        <end position="72"/>
    </location>
</feature>
<organism>
    <name type="scientific">Vaccinia virus (strain Western Reserve)</name>
    <name type="common">VACV</name>
    <name type="synonym">Vaccinia virus (strain WR)</name>
    <dbReference type="NCBI Taxonomy" id="10254"/>
    <lineage>
        <taxon>Viruses</taxon>
        <taxon>Varidnaviria</taxon>
        <taxon>Bamfordvirae</taxon>
        <taxon>Nucleocytoviricota</taxon>
        <taxon>Pokkesviricetes</taxon>
        <taxon>Chitovirales</taxon>
        <taxon>Poxviridae</taxon>
        <taxon>Chordopoxvirinae</taxon>
        <taxon>Orthopoxvirus</taxon>
        <taxon>Vaccinia virus</taxon>
    </lineage>
</organism>
<dbReference type="EMBL" id="D11079">
    <property type="protein sequence ID" value="BAA01827.1"/>
    <property type="molecule type" value="Genomic_DNA"/>
</dbReference>
<dbReference type="EMBL" id="M58054">
    <property type="protein sequence ID" value="AAA48339.1"/>
    <property type="molecule type" value="Genomic_DNA"/>
</dbReference>
<dbReference type="EMBL" id="AY243312">
    <property type="protein sequence ID" value="AAO89458.1"/>
    <property type="molecule type" value="Genomic_DNA"/>
</dbReference>
<dbReference type="PIR" id="JQ1791">
    <property type="entry name" value="JQ1791"/>
</dbReference>
<dbReference type="RefSeq" id="YP_233061.1">
    <property type="nucleotide sequence ID" value="NC_006998.1"/>
</dbReference>
<dbReference type="SMR" id="P24756"/>
<dbReference type="DNASU" id="3707710"/>
<dbReference type="GeneID" id="3707710"/>
<dbReference type="KEGG" id="vg:3707710"/>
<dbReference type="Proteomes" id="UP000000344">
    <property type="component" value="Genome"/>
</dbReference>
<dbReference type="Gene3D" id="2.10.50.10">
    <property type="entry name" value="Tumor Necrosis Factor Receptor, subunit A, domain 2"/>
    <property type="match status" value="1"/>
</dbReference>
<dbReference type="InterPro" id="IPR001368">
    <property type="entry name" value="TNFR/NGFR_Cys_rich_reg"/>
</dbReference>
<dbReference type="Pfam" id="PF00020">
    <property type="entry name" value="TNFR_c6"/>
    <property type="match status" value="1"/>
</dbReference>
<dbReference type="SMART" id="SM00208">
    <property type="entry name" value="TNFR"/>
    <property type="match status" value="1"/>
</dbReference>
<dbReference type="SUPFAM" id="SSF57586">
    <property type="entry name" value="TNF receptor-like"/>
    <property type="match status" value="1"/>
</dbReference>
<dbReference type="PROSITE" id="PS00652">
    <property type="entry name" value="TNFR_NGFR_1"/>
    <property type="match status" value="1"/>
</dbReference>
<dbReference type="PROSITE" id="PS50050">
    <property type="entry name" value="TNFR_NGFR_2"/>
    <property type="match status" value="1"/>
</dbReference>
<reference key="1">
    <citation type="journal article" date="1991" name="J. Gen. Virol.">
        <title>Nucleotide sequence of 42 kbp of vaccinia virus strain WR from near the right inverted terminal repeat.</title>
        <authorList>
            <person name="Smith G.L."/>
            <person name="Chan Y.S."/>
            <person name="Howard S.T."/>
        </authorList>
    </citation>
    <scope>NUCLEOTIDE SEQUENCE [GENOMIC DNA]</scope>
</reference>
<reference key="2">
    <citation type="journal article" date="1991" name="Virology">
        <title>Vaccinia virus homologues of the Shope fibroma virus inverted terminal repeat proteins and a discontinuous ORF related to the tumor necrosis factor receptor family.</title>
        <authorList>
            <person name="Howard S.T."/>
            <person name="Chan Y.S."/>
            <person name="Smith G.L."/>
        </authorList>
    </citation>
    <scope>NUCLEOTIDE SEQUENCE [GENOMIC DNA]</scope>
</reference>
<reference key="3">
    <citation type="submission" date="2003-02" db="EMBL/GenBank/DDBJ databases">
        <title>Sequencing of the coding region of Vaccinia-WR to an average 9-fold redundancy and an error rate of 0.16/10kb.</title>
        <authorList>
            <person name="Esposito J.J."/>
            <person name="Frace A.M."/>
            <person name="Sammons S.A."/>
            <person name="Olsen-Rasmussen M."/>
            <person name="Osborne J."/>
            <person name="Wohlhueter R."/>
        </authorList>
    </citation>
    <scope>NUCLEOTIDE SEQUENCE [LARGE SCALE GENOMIC DNA]</scope>
</reference>
<accession>P24756</accession>
<accession>Q76ZM5</accession>
<keyword id="KW-1015">Disulfide bond</keyword>
<keyword id="KW-0426">Late protein</keyword>
<keyword id="KW-1185">Reference proteome</keyword>
<keyword id="KW-0677">Repeat</keyword>
<gene>
    <name type="ordered locus">VACWR179</name>
    <name type="ORF">A53R</name>
</gene>
<evidence type="ECO:0000255" key="1">
    <source>
        <dbReference type="PROSITE-ProRule" id="PRU00206"/>
    </source>
</evidence>
<evidence type="ECO:0000305" key="2"/>
<organismHost>
    <name type="scientific">Bos taurus</name>
    <name type="common">Bovine</name>
    <dbReference type="NCBI Taxonomy" id="9913"/>
</organismHost>
<name>A53R_VACCW</name>
<comment type="miscellaneous">
    <text>The A53R protein from Western Reserve and Copenhagen strains are predicted to be inactive because of mutations that introduce stop codons or frameshifts when compared to other poxiviruses.</text>
</comment>
<comment type="similarity">
    <text evidence="2">Belongs to the poxviridae A53R protein family.</text>
</comment>
<protein>
    <recommendedName>
        <fullName>Truncated secreted TNF-receptor-like protein A53R</fullName>
    </recommendedName>
</protein>
<sequence length="103" mass="12001">MIILKDGYKEFADCMYYFLHYYIGYGRYTYSATNGSCDKGEYLDKRHNQCCNRCPPGEFAKVRCNGNDNTKCERCPPHTYTTIPIILMDVINVENAQPDHLIR</sequence>